<accession>A6THB2</accession>
<dbReference type="EMBL" id="CP000647">
    <property type="protein sequence ID" value="ABR79946.1"/>
    <property type="status" value="ALT_INIT"/>
    <property type="molecule type" value="Genomic_DNA"/>
</dbReference>
<dbReference type="PDB" id="4APV">
    <property type="method" value="X-ray"/>
    <property type="resolution" value="2.00 A"/>
    <property type="chains" value="A=2-102"/>
</dbReference>
<dbReference type="PDBsum" id="4APV"/>
<dbReference type="STRING" id="272620.KPN_04595"/>
<dbReference type="PaxDb" id="272620-KPN_04595"/>
<dbReference type="EnsemblBacteria" id="ABR79946">
    <property type="protein sequence ID" value="ABR79946"/>
    <property type="gene ID" value="KPN_04595"/>
</dbReference>
<dbReference type="KEGG" id="kpn:KPN_04595"/>
<dbReference type="HOGENOM" id="CLU_166075_2_1_6"/>
<dbReference type="Proteomes" id="UP000000265">
    <property type="component" value="Chromosome"/>
</dbReference>
<dbReference type="GO" id="GO:0030894">
    <property type="term" value="C:replisome"/>
    <property type="evidence" value="ECO:0007669"/>
    <property type="project" value="InterPro"/>
</dbReference>
<dbReference type="GO" id="GO:0003697">
    <property type="term" value="F:single-stranded DNA binding"/>
    <property type="evidence" value="ECO:0007669"/>
    <property type="project" value="InterPro"/>
</dbReference>
<dbReference type="GO" id="GO:0006260">
    <property type="term" value="P:DNA replication"/>
    <property type="evidence" value="ECO:0007669"/>
    <property type="project" value="InterPro"/>
</dbReference>
<dbReference type="Gene3D" id="2.40.50.140">
    <property type="entry name" value="Nucleic acid-binding proteins"/>
    <property type="match status" value="1"/>
</dbReference>
<dbReference type="HAMAP" id="MF_00720">
    <property type="entry name" value="PriB"/>
    <property type="match status" value="1"/>
</dbReference>
<dbReference type="InterPro" id="IPR012340">
    <property type="entry name" value="NA-bd_OB-fold"/>
</dbReference>
<dbReference type="InterPro" id="IPR023646">
    <property type="entry name" value="Prisomal_replication_PriB"/>
</dbReference>
<dbReference type="PIRSF" id="PIRSF003135">
    <property type="entry name" value="Primosomal_n"/>
    <property type="match status" value="1"/>
</dbReference>
<dbReference type="SUPFAM" id="SSF50249">
    <property type="entry name" value="Nucleic acid-binding proteins"/>
    <property type="match status" value="1"/>
</dbReference>
<dbReference type="PROSITE" id="PS50935">
    <property type="entry name" value="SSB"/>
    <property type="match status" value="1"/>
</dbReference>
<organism>
    <name type="scientific">Klebsiella pneumoniae subsp. pneumoniae (strain ATCC 700721 / MGH 78578)</name>
    <dbReference type="NCBI Taxonomy" id="272620"/>
    <lineage>
        <taxon>Bacteria</taxon>
        <taxon>Pseudomonadati</taxon>
        <taxon>Pseudomonadota</taxon>
        <taxon>Gammaproteobacteria</taxon>
        <taxon>Enterobacterales</taxon>
        <taxon>Enterobacteriaceae</taxon>
        <taxon>Klebsiella/Raoultella group</taxon>
        <taxon>Klebsiella</taxon>
        <taxon>Klebsiella pneumoniae complex</taxon>
    </lineage>
</organism>
<evidence type="ECO:0000255" key="1">
    <source>
        <dbReference type="HAMAP-Rule" id="MF_00720"/>
    </source>
</evidence>
<evidence type="ECO:0000269" key="2">
    <source>
    </source>
</evidence>
<evidence type="ECO:0000269" key="3">
    <source>
    </source>
</evidence>
<evidence type="ECO:0000269" key="4">
    <source>
    </source>
</evidence>
<evidence type="ECO:0000312" key="5">
    <source>
        <dbReference type="EMBL" id="ABR79946.1"/>
    </source>
</evidence>
<evidence type="ECO:0007744" key="6">
    <source>
        <dbReference type="PDB" id="4APV"/>
    </source>
</evidence>
<reference evidence="5" key="1">
    <citation type="submission" date="2006-09" db="EMBL/GenBank/DDBJ databases">
        <authorList>
            <consortium name="The Klebsiella pneumonia Genome Sequencing Project"/>
            <person name="McClelland M."/>
            <person name="Sanderson E.K."/>
            <person name="Spieth J."/>
            <person name="Clifton W.S."/>
            <person name="Latreille P."/>
            <person name="Sabo A."/>
            <person name="Pepin K."/>
            <person name="Bhonagiri V."/>
            <person name="Porwollik S."/>
            <person name="Ali J."/>
            <person name="Wilson R.K."/>
        </authorList>
    </citation>
    <scope>NUCLEOTIDE SEQUENCE [LARGE SCALE GENOMIC DNA]</scope>
    <source>
        <strain>ATCC 700721 / MGH 78578</strain>
    </source>
</reference>
<reference key="2">
    <citation type="journal article" date="2011" name="PLoS ONE">
        <title>The priB gene of Klebsiella pneumoniae encodes a 104-amino acid protein that is similar in structure and function to Escherichia coli PriB.</title>
        <authorList>
            <person name="Berg L."/>
            <person name="Lopper M.E."/>
        </authorList>
    </citation>
    <scope>SEQUENCE REVISION TO N-TERMINUS</scope>
    <scope>FUNCTION</scope>
    <scope>SUBUNIT</scope>
    <scope>DNA-BINDING</scope>
    <source>
        <strain>ATCC 700721 / MGH 78578</strain>
    </source>
</reference>
<reference key="3">
    <citation type="journal article" date="2013" name="Biochem. Biophys. Res. Commun.">
        <title>The N-terminal domain of DnaT, a primosomal DNA replication protein, is crucial for PriB binding and self-trimerization.</title>
        <authorList>
            <person name="Huang Y.H."/>
            <person name="Huang C.Y."/>
        </authorList>
    </citation>
    <scope>SUBUNIT</scope>
    <scope>INTERACTION WITH DNAT</scope>
    <source>
        <strain>ATCC 700721 / MGH 78578</strain>
    </source>
</reference>
<reference evidence="6" key="4">
    <citation type="journal article" date="2012" name="Genes Cells">
        <title>Crystal structure and DNA-binding mode of Klebsiella pneumoniae primosomal PriB protein.</title>
        <authorList>
            <person name="Huang Y.H."/>
            <person name="Lo Y.H."/>
            <person name="Huang W."/>
            <person name="Huang C.Y."/>
        </authorList>
    </citation>
    <scope>X-RAY CRYSTALLOGRAPHY (2.10 ANGSTROMS) OF 2-102</scope>
    <scope>SEQUENCE REVISION TO N-TERMINUS</scope>
    <scope>FUNCTION</scope>
    <scope>DNA-BINDING</scope>
    <scope>MUTAGENESIS OF PHE-42; ARG-44; TRP-47 AND LYS-82</scope>
    <source>
        <strain>ATCC 700721 / MGH 78578</strain>
    </source>
</reference>
<comment type="function">
    <text evidence="1">Involved in the restart of stalled replication forks, which reloads the replicative helicase on sites far from the origin of replication; the PriA-PriB pathway is the major replication restart pathway. During primosome assembly it facilitates complex formation between PriA and DnaT on DNA; stabilizes PriA on DNA. Stimulates the DNA unwinding activity of PriA helicase.</text>
</comment>
<comment type="function">
    <text evidence="3">Binds single-stranded (ss)DNA at the primosome assembly site (PAS). One study finds it binds 15 nucleotide (nt) ssDNA (PubMed:21931731). Another study finds the minimal ssDNA length for binding to PriB is 25 nt; prefers dT(30) over dA(30) (PubMed:22938024). Also binds 22 nt dsDNA (PubMed:22938024).</text>
</comment>
<comment type="subunit">
    <text evidence="1 2 4">Homodimer (PubMed:21931731). Interacts with DnaT (PubMed:24280305). Interacts with PriA. Component of the replication restart primosome. Primosome assembly occurs via a 'hand-off' mechanism. PriA binds to replication forks, subsequently PriB then DnaT bind; DnaT then displaces ssDNA to generate the helicase loading substrate.</text>
</comment>
<comment type="similarity">
    <text evidence="1">Belongs to the PriB family.</text>
</comment>
<comment type="sequence caution" evidence="2 3">
    <conflict type="erroneous initiation">
        <sequence resource="EMBL-CDS" id="ABR79946"/>
    </conflict>
    <text>Truncated N-terminus.</text>
</comment>
<protein>
    <recommendedName>
        <fullName evidence="1">Replication restart protein PriB</fullName>
    </recommendedName>
</protein>
<name>PRIB_KLEP7</name>
<keyword id="KW-0002">3D-structure</keyword>
<keyword id="KW-0235">DNA replication</keyword>
<keyword id="KW-0238">DNA-binding</keyword>
<keyword id="KW-0639">Primosome</keyword>
<feature type="chain" id="PRO_0000462252" description="Replication restart protein PriB">
    <location>
        <begin position="1"/>
        <end position="104"/>
    </location>
</feature>
<feature type="domain" description="SSB" evidence="1">
    <location>
        <begin position="1"/>
        <end position="101"/>
    </location>
</feature>
<feature type="mutagenesis site" description="About 2-fold less binding to ssDNA, no change in dsDNA binding. Significantly decreased binding to ssDNA and dsDNA; when associated with A-44." evidence="3">
    <original>F</original>
    <variation>A</variation>
    <location>
        <position position="42"/>
    </location>
</feature>
<feature type="mutagenesis site" description="About 2-fold less binding to ssDNA, no change in dsDNA binding. Significantly decreased binding to ssDNA and dsDNA; when associated with A-42." evidence="3">
    <original>R</original>
    <variation>A</variation>
    <location>
        <position position="44"/>
    </location>
</feature>
<feature type="mutagenesis site" description="About 2-fold less binding to ssDNA, 3-fold less binding to dsDNA. Significantly decreased binding to ssDNA and dsDNA; when associated with A-82." evidence="3">
    <original>W</original>
    <variation>A</variation>
    <location>
        <position position="47"/>
    </location>
</feature>
<feature type="mutagenesis site" description="About 4-fold less binding to ssDNA, 3-fold less binding to dsDNA.Significantly decreased binding to ssDNA and dsDNA; when associated with A-47." evidence="3">
    <original>K</original>
    <variation>A</variation>
    <location>
        <position position="82"/>
    </location>
</feature>
<proteinExistence type="evidence at protein level"/>
<sequence>MTNRLELSGIICRTPLRKVSPSGIPHCQFVLEHRSVQEEAGFHRQAWCQMPVIISGHENQAITHSITVGSAVTVRGFISCHKAKNGLSKMVLHAEQIELIDSGD</sequence>
<gene>
    <name evidence="1" type="primary">priB</name>
    <name evidence="5" type="ORF">KPN_04595</name>
</gene>